<organism>
    <name type="scientific">Candida glabrata (strain ATCC 2001 / BCRC 20586 / JCM 3761 / NBRC 0622 / NRRL Y-65 / CBS 138)</name>
    <name type="common">Yeast</name>
    <name type="synonym">Nakaseomyces glabratus</name>
    <dbReference type="NCBI Taxonomy" id="284593"/>
    <lineage>
        <taxon>Eukaryota</taxon>
        <taxon>Fungi</taxon>
        <taxon>Dikarya</taxon>
        <taxon>Ascomycota</taxon>
        <taxon>Saccharomycotina</taxon>
        <taxon>Saccharomycetes</taxon>
        <taxon>Saccharomycetales</taxon>
        <taxon>Saccharomycetaceae</taxon>
        <taxon>Nakaseomyces</taxon>
    </lineage>
</organism>
<protein>
    <recommendedName>
        <fullName>Protein transport protein SEC13-2</fullName>
    </recommendedName>
</protein>
<gene>
    <name type="primary">SEC132</name>
    <name type="ordered locus">CAGL0I03454g</name>
</gene>
<accession>Q6FQU6</accession>
<reference key="1">
    <citation type="journal article" date="2004" name="Nature">
        <title>Genome evolution in yeasts.</title>
        <authorList>
            <person name="Dujon B."/>
            <person name="Sherman D."/>
            <person name="Fischer G."/>
            <person name="Durrens P."/>
            <person name="Casaregola S."/>
            <person name="Lafontaine I."/>
            <person name="de Montigny J."/>
            <person name="Marck C."/>
            <person name="Neuveglise C."/>
            <person name="Talla E."/>
            <person name="Goffard N."/>
            <person name="Frangeul L."/>
            <person name="Aigle M."/>
            <person name="Anthouard V."/>
            <person name="Babour A."/>
            <person name="Barbe V."/>
            <person name="Barnay S."/>
            <person name="Blanchin S."/>
            <person name="Beckerich J.-M."/>
            <person name="Beyne E."/>
            <person name="Bleykasten C."/>
            <person name="Boisrame A."/>
            <person name="Boyer J."/>
            <person name="Cattolico L."/>
            <person name="Confanioleri F."/>
            <person name="de Daruvar A."/>
            <person name="Despons L."/>
            <person name="Fabre E."/>
            <person name="Fairhead C."/>
            <person name="Ferry-Dumazet H."/>
            <person name="Groppi A."/>
            <person name="Hantraye F."/>
            <person name="Hennequin C."/>
            <person name="Jauniaux N."/>
            <person name="Joyet P."/>
            <person name="Kachouri R."/>
            <person name="Kerrest A."/>
            <person name="Koszul R."/>
            <person name="Lemaire M."/>
            <person name="Lesur I."/>
            <person name="Ma L."/>
            <person name="Muller H."/>
            <person name="Nicaud J.-M."/>
            <person name="Nikolski M."/>
            <person name="Oztas S."/>
            <person name="Ozier-Kalogeropoulos O."/>
            <person name="Pellenz S."/>
            <person name="Potier S."/>
            <person name="Richard G.-F."/>
            <person name="Straub M.-L."/>
            <person name="Suleau A."/>
            <person name="Swennen D."/>
            <person name="Tekaia F."/>
            <person name="Wesolowski-Louvel M."/>
            <person name="Westhof E."/>
            <person name="Wirth B."/>
            <person name="Zeniou-Meyer M."/>
            <person name="Zivanovic Y."/>
            <person name="Bolotin-Fukuhara M."/>
            <person name="Thierry A."/>
            <person name="Bouchier C."/>
            <person name="Caudron B."/>
            <person name="Scarpelli C."/>
            <person name="Gaillardin C."/>
            <person name="Weissenbach J."/>
            <person name="Wincker P."/>
            <person name="Souciet J.-L."/>
        </authorList>
    </citation>
    <scope>NUCLEOTIDE SEQUENCE [LARGE SCALE GENOMIC DNA]</scope>
    <source>
        <strain>ATCC 2001 / BCRC 20586 / JCM 3761 / NBRC 0622 / NRRL Y-65 / CBS 138</strain>
    </source>
</reference>
<comment type="function">
    <text evidence="2">Component of the coat protein complex II (COPII) which promotes the formation of transport vesicles from the endoplasmic reticulum (ER). The coat has two main functions, the physical deformation of the endoplasmic reticulum membrane into vesicles and the selection of cargo molecules. It also functions as a component of the nuclear pore complex (NPC). NPC components, collectively referred to as nucleoporins (NUPs), can play the role of both NPC structural components and of docking or interaction partners for transiently associated nuclear transport factors. SEC13 is required for efficient mRNA export from the nucleus to the cytoplasm and for correct nuclear pore biogenesis and distribution (By similarity).</text>
</comment>
<comment type="subunit">
    <text evidence="2">The COPII coat is composed of at least 5 proteins: the SEC23/24 complex, the SEC13/31 complex, and the protein SAR1. Component of the nuclear pore complex (NPC). NPC constitutes the exclusive means of nucleocytoplasmic transport. NPCs allow the passive diffusion of ions and small molecules and the active, nuclear transport receptor-mediated bidirectional transport of macromolecules such as proteins, RNAs, ribonucleoparticles (RNPs), and ribosomal subunits across the nuclear envelope. Due to its 8-fold rotational symmetry, all subunits are present with 8 copies or multiples thereof.</text>
</comment>
<comment type="subcellular location">
    <subcellularLocation>
        <location evidence="1">Cytoplasmic vesicle</location>
        <location evidence="1">COPII-coated vesicle membrane</location>
        <topology evidence="1">Peripheral membrane protein</topology>
        <orientation evidence="1">Cytoplasmic side</orientation>
    </subcellularLocation>
    <subcellularLocation>
        <location evidence="1">Endoplasmic reticulum membrane</location>
        <topology evidence="1">Peripheral membrane protein</topology>
        <orientation evidence="1">Cytoplasmic side</orientation>
    </subcellularLocation>
    <subcellularLocation>
        <location evidence="2">Nucleus</location>
        <location evidence="2">Nuclear pore complex</location>
    </subcellularLocation>
</comment>
<comment type="similarity">
    <text evidence="3">Belongs to the WD repeat SEC13 family.</text>
</comment>
<sequence length="303" mass="33237">MVKIENAHEGVIHHAALNYYGTRLATCSSDKTVKIFEINDVNNSSSLLETLVGHEGPVWYADWCHPSLGENLLATCGYDGKVLIWKESGHGGKMQIIGKHAVHSASVNCVKWAPHEYGLILLCGSADGKISVVELKDGQIASTKILDNAHKFGVNSISWAPLMKTDSSDDGDETTAVKQFISGGNDNLVKIWKFDDDQETYVVADTLEGHKDAVTAVDWSPTTLLQSYVASVSNDKQCLVWTQDHSSKKNDWKKISVNEGKFEQKLGSVSWSLSGNLLAVSDDDKNVTIWKESGDGKWEEVVN</sequence>
<name>SC132_CANGA</name>
<evidence type="ECO:0000250" key="1"/>
<evidence type="ECO:0000250" key="2">
    <source>
        <dbReference type="UniProtKB" id="Q04491"/>
    </source>
</evidence>
<evidence type="ECO:0000305" key="3"/>
<feature type="chain" id="PRO_0000295410" description="Protein transport protein SEC13-2">
    <location>
        <begin position="1"/>
        <end position="303"/>
    </location>
</feature>
<feature type="repeat" description="WD 1">
    <location>
        <begin position="7"/>
        <end position="46"/>
    </location>
</feature>
<feature type="repeat" description="WD 2">
    <location>
        <begin position="53"/>
        <end position="95"/>
    </location>
</feature>
<feature type="repeat" description="WD 3">
    <location>
        <begin position="102"/>
        <end position="143"/>
    </location>
</feature>
<feature type="repeat" description="WD 4">
    <location>
        <begin position="149"/>
        <end position="202"/>
    </location>
</feature>
<feature type="repeat" description="WD 5">
    <location>
        <begin position="209"/>
        <end position="251"/>
    </location>
</feature>
<feature type="repeat" description="WD 6">
    <location>
        <begin position="261"/>
        <end position="300"/>
    </location>
</feature>
<dbReference type="EMBL" id="CR380955">
    <property type="protein sequence ID" value="CAG60335.1"/>
    <property type="molecule type" value="Genomic_DNA"/>
</dbReference>
<dbReference type="RefSeq" id="XP_447398.1">
    <property type="nucleotide sequence ID" value="XM_447398.1"/>
</dbReference>
<dbReference type="SMR" id="Q6FQU6"/>
<dbReference type="STRING" id="284593.Q6FQU6"/>
<dbReference type="EnsemblFungi" id="CAGL0I03454g-T">
    <property type="protein sequence ID" value="CAGL0I03454g-T-p1"/>
    <property type="gene ID" value="CAGL0I03454g"/>
</dbReference>
<dbReference type="KEGG" id="cgr:2889177"/>
<dbReference type="CGD" id="CAL0130139">
    <property type="gene designation" value="CAGL0I03454g"/>
</dbReference>
<dbReference type="VEuPathDB" id="FungiDB:B1J91_I03454g"/>
<dbReference type="VEuPathDB" id="FungiDB:CAGL0I03454g"/>
<dbReference type="eggNOG" id="KOG1332">
    <property type="taxonomic scope" value="Eukaryota"/>
</dbReference>
<dbReference type="HOGENOM" id="CLU_032441_0_1_1"/>
<dbReference type="InParanoid" id="Q6FQU6"/>
<dbReference type="Proteomes" id="UP000002428">
    <property type="component" value="Chromosome I"/>
</dbReference>
<dbReference type="GO" id="GO:0030127">
    <property type="term" value="C:COPII vesicle coat"/>
    <property type="evidence" value="ECO:0007669"/>
    <property type="project" value="TreeGrafter"/>
</dbReference>
<dbReference type="GO" id="GO:0005789">
    <property type="term" value="C:endoplasmic reticulum membrane"/>
    <property type="evidence" value="ECO:0007669"/>
    <property type="project" value="UniProtKB-SubCell"/>
</dbReference>
<dbReference type="GO" id="GO:0031080">
    <property type="term" value="C:nuclear pore outer ring"/>
    <property type="evidence" value="ECO:0007669"/>
    <property type="project" value="TreeGrafter"/>
</dbReference>
<dbReference type="GO" id="GO:0005198">
    <property type="term" value="F:structural molecule activity"/>
    <property type="evidence" value="ECO:0007669"/>
    <property type="project" value="InterPro"/>
</dbReference>
<dbReference type="GO" id="GO:0090114">
    <property type="term" value="P:COPII-coated vesicle budding"/>
    <property type="evidence" value="ECO:0007669"/>
    <property type="project" value="TreeGrafter"/>
</dbReference>
<dbReference type="GO" id="GO:0051028">
    <property type="term" value="P:mRNA transport"/>
    <property type="evidence" value="ECO:0007669"/>
    <property type="project" value="UniProtKB-KW"/>
</dbReference>
<dbReference type="GO" id="GO:0032008">
    <property type="term" value="P:positive regulation of TOR signaling"/>
    <property type="evidence" value="ECO:0007669"/>
    <property type="project" value="TreeGrafter"/>
</dbReference>
<dbReference type="GO" id="GO:0032527">
    <property type="term" value="P:protein exit from endoplasmic reticulum"/>
    <property type="evidence" value="ECO:0007669"/>
    <property type="project" value="TreeGrafter"/>
</dbReference>
<dbReference type="GO" id="GO:0006606">
    <property type="term" value="P:protein import into nucleus"/>
    <property type="evidence" value="ECO:0007669"/>
    <property type="project" value="TreeGrafter"/>
</dbReference>
<dbReference type="Gene3D" id="2.130.10.10">
    <property type="entry name" value="YVTN repeat-like/Quinoprotein amine dehydrogenase"/>
    <property type="match status" value="1"/>
</dbReference>
<dbReference type="InterPro" id="IPR037363">
    <property type="entry name" value="Sec13/Seh1_fam"/>
</dbReference>
<dbReference type="InterPro" id="IPR015943">
    <property type="entry name" value="WD40/YVTN_repeat-like_dom_sf"/>
</dbReference>
<dbReference type="InterPro" id="IPR036322">
    <property type="entry name" value="WD40_repeat_dom_sf"/>
</dbReference>
<dbReference type="InterPro" id="IPR001680">
    <property type="entry name" value="WD40_rpt"/>
</dbReference>
<dbReference type="PANTHER" id="PTHR11024">
    <property type="entry name" value="NUCLEAR PORE COMPLEX PROTEIN SEC13 / SEH1 FAMILY MEMBER"/>
    <property type="match status" value="1"/>
</dbReference>
<dbReference type="PANTHER" id="PTHR11024:SF2">
    <property type="entry name" value="PROTEIN SEC13 HOMOLOG"/>
    <property type="match status" value="1"/>
</dbReference>
<dbReference type="Pfam" id="PF00400">
    <property type="entry name" value="WD40"/>
    <property type="match status" value="6"/>
</dbReference>
<dbReference type="SMART" id="SM00320">
    <property type="entry name" value="WD40"/>
    <property type="match status" value="6"/>
</dbReference>
<dbReference type="SUPFAM" id="SSF50978">
    <property type="entry name" value="WD40 repeat-like"/>
    <property type="match status" value="1"/>
</dbReference>
<dbReference type="PROSITE" id="PS50082">
    <property type="entry name" value="WD_REPEATS_2"/>
    <property type="match status" value="2"/>
</dbReference>
<dbReference type="PROSITE" id="PS50294">
    <property type="entry name" value="WD_REPEATS_REGION"/>
    <property type="match status" value="1"/>
</dbReference>
<keyword id="KW-0968">Cytoplasmic vesicle</keyword>
<keyword id="KW-0256">Endoplasmic reticulum</keyword>
<keyword id="KW-0931">ER-Golgi transport</keyword>
<keyword id="KW-0472">Membrane</keyword>
<keyword id="KW-0509">mRNA transport</keyword>
<keyword id="KW-0906">Nuclear pore complex</keyword>
<keyword id="KW-0539">Nucleus</keyword>
<keyword id="KW-0653">Protein transport</keyword>
<keyword id="KW-1185">Reference proteome</keyword>
<keyword id="KW-0677">Repeat</keyword>
<keyword id="KW-0811">Translocation</keyword>
<keyword id="KW-0813">Transport</keyword>
<keyword id="KW-0853">WD repeat</keyword>
<proteinExistence type="inferred from homology"/>